<evidence type="ECO:0000255" key="1"/>
<evidence type="ECO:0000256" key="2">
    <source>
        <dbReference type="SAM" id="MobiDB-lite"/>
    </source>
</evidence>
<evidence type="ECO:0000269" key="3">
    <source>
    </source>
</evidence>
<evidence type="ECO:0000305" key="4"/>
<reference key="1">
    <citation type="journal article" date="1990" name="Curr. Top. Microbiol. Immunol.">
        <title>Analysis of the protein-coding content of the sequence of human cytomegalovirus strain AD169.</title>
        <authorList>
            <person name="Chee M.S."/>
            <person name="Bankier A.T."/>
            <person name="Beck S."/>
            <person name="Bohni R."/>
            <person name="Brown C.M."/>
            <person name="Cerny R."/>
            <person name="Horsnell T."/>
            <person name="Hutchison C.A. III"/>
            <person name="Kouzarides T."/>
            <person name="Martignetti J.A."/>
            <person name="Preddie E."/>
            <person name="Satchwell S.C."/>
            <person name="Tomlinson P."/>
            <person name="Weston K.M."/>
            <person name="Barrell B.G."/>
        </authorList>
    </citation>
    <scope>NUCLEOTIDE SEQUENCE [LARGE SCALE GENOMIC DNA]</scope>
</reference>
<reference key="2">
    <citation type="journal article" date="2003" name="J. Gen. Virol.">
        <title>The human cytomegalovirus genome revisited: comparison with the chimpanzee cytomegalovirus genome.</title>
        <authorList>
            <person name="Davison A.J."/>
            <person name="Dolan A."/>
            <person name="Akter P."/>
            <person name="Addison C."/>
            <person name="Dargan D.J."/>
            <person name="Alcendor D.J."/>
            <person name="McGeoch D.J."/>
            <person name="Hayward G.S."/>
        </authorList>
    </citation>
    <scope>GENOME REANNOTATION</scope>
</reference>
<reference key="3">
    <citation type="journal article" date="2003" name="J. Gen. Virol.">
        <authorList>
            <person name="Davison A.J."/>
            <person name="Dolan A."/>
            <person name="Akter P."/>
            <person name="Addison C."/>
            <person name="Dargan D.J."/>
            <person name="Alcendor D.J."/>
            <person name="McGeoch D.J."/>
            <person name="Hayward G.S."/>
        </authorList>
    </citation>
    <scope>ERRATUM OF PUBMED:12533697</scope>
</reference>
<reference key="4">
    <citation type="journal article" date="2021" name="PLoS Pathog.">
        <title>Cytomegalovirus late transcription factor target sequence diversity orchestrates viral early to late transcription.</title>
        <authorList>
            <person name="Li M."/>
            <person name="Hu Q."/>
            <person name="Collins G."/>
            <person name="Parida M."/>
            <person name="Ball C.B."/>
            <person name="Price D.H."/>
            <person name="Meier J.L."/>
        </authorList>
    </citation>
    <scope>FUNCTION</scope>
    <scope>SUBCELLULAR LOCATION</scope>
</reference>
<gene>
    <name type="primary">UL87</name>
</gene>
<feature type="chain" id="PRO_0000116231" description="Protein UL87">
    <location>
        <begin position="1"/>
        <end position="941"/>
    </location>
</feature>
<feature type="region of interest" description="Disordered" evidence="2">
    <location>
        <begin position="482"/>
        <end position="508"/>
    </location>
</feature>
<feature type="region of interest" description="Disordered" evidence="2">
    <location>
        <begin position="910"/>
        <end position="941"/>
    </location>
</feature>
<feature type="compositionally biased region" description="Acidic residues" evidence="2">
    <location>
        <begin position="488"/>
        <end position="500"/>
    </location>
</feature>
<feature type="compositionally biased region" description="Low complexity" evidence="2">
    <location>
        <begin position="910"/>
        <end position="929"/>
    </location>
</feature>
<feature type="glycosylation site" description="N-linked (GlcNAc...) asparagine; by host" evidence="1">
    <location>
        <position position="37"/>
    </location>
</feature>
<feature type="glycosylation site" description="N-linked (GlcNAc...) asparagine; by host" evidence="1">
    <location>
        <position position="591"/>
    </location>
</feature>
<feature type="glycosylation site" description="N-linked (GlcNAc...) asparagine; by host" evidence="1">
    <location>
        <position position="661"/>
    </location>
</feature>
<feature type="glycosylation site" description="N-linked (GlcNAc...) asparagine; by host" evidence="1">
    <location>
        <position position="801"/>
    </location>
</feature>
<organismHost>
    <name type="scientific">Homo sapiens</name>
    <name type="common">Human</name>
    <dbReference type="NCBI Taxonomy" id="9606"/>
</organismHost>
<protein>
    <recommendedName>
        <fullName>Protein UL87</fullName>
    </recommendedName>
</protein>
<sequence length="941" mass="104804">MAGAAPRRLGCDALIVVGGSAMPRRVLHVPVHVRACNLTQELSTGEDARFCRPRPVNVERVRAVFAALYRACPIHVRTEPERVKLVLGRLLLGPVAVPCFCDGEVEGHGEHLVPTTQFCRGPLLYVHRRCCCGSVTAGRALSYHVLENHVATHVLRGLLSLTEWNRELPSLFCDCPGGGGASGTEERYAMACLPRDLSLHLDDYPYLMVEIGRVLSVSEVDDYVTAVSGYLGEAAAPRIQVHYKLLFGLNVRPQAPCALDATRDFFLLELQKLWLGVEYHHEVTSEFFGRVLAQLHRDRARVMMALRLPEQTVCHLSTFVLSRFKRQVLYFKLQVSYGKCRTGHADRSGGGGNGGNQGHHNLLCYRRLSVTFADTDTVWRNLFYVYYELARDLGSHGTEDRPVSRGYGVSCASRTSRLSPSESTVVSANGHALSSTALPTTSAGHKLSLPRDPAADRVRRYVCIISRLMYARYGERWRKHCQRRSETGEEEEEETLESGETDATPPFDFTGQQLRRAYQEHRRRKHLAVQRYAPCRRKLIGGMEFAEVTGVSLDRIAVNAFNTNRVINMKAALSSIAASGLGVRAPRLPKNMTHSFVMYKHTFKEPACTVSTFVSNDAVYINSLNVNIRGSYPEFLYSLGVYRLHVNIDHFFLPAVVCNSNSSLDVHGLEDQAVIRSERSKVYWTTNFPCMISHTNNVNVGWFKAATAIVPRVSGADLEAILLKELSCIKNMRDVCIDYGLHRVFTQLELRNSYQIPFLAKQLVLFLRACLLKLHGREKRLQLDRLVFEAAQRGLFDYSKNLTAHTKIKHTCALIGSRLANNVPKILARNKKVKLDHLGRNANVLTVCRHVEAHKIPRTRLKVLVEVLGALQSISGTPHTREVIHQTLFRLCSAAAATSGLCSSPPPLCVSSSSSVPSVPTSVSVDGSSEPTSPRARFASR</sequence>
<name>UL87_HCMVA</name>
<organism>
    <name type="scientific">Human cytomegalovirus (strain AD169)</name>
    <name type="common">HHV-5</name>
    <name type="synonym">Human herpesvirus 5</name>
    <dbReference type="NCBI Taxonomy" id="10360"/>
    <lineage>
        <taxon>Viruses</taxon>
        <taxon>Duplodnaviria</taxon>
        <taxon>Heunggongvirae</taxon>
        <taxon>Peploviricota</taxon>
        <taxon>Herviviricetes</taxon>
        <taxon>Herpesvirales</taxon>
        <taxon>Orthoherpesviridae</taxon>
        <taxon>Betaherpesvirinae</taxon>
        <taxon>Cytomegalovirus</taxon>
        <taxon>Cytomegalovirus humanbeta5</taxon>
        <taxon>Human cytomegalovirus</taxon>
    </lineage>
</organism>
<dbReference type="EMBL" id="X17403">
    <property type="protein sequence ID" value="CAA35361.1"/>
    <property type="molecule type" value="Genomic_DNA"/>
</dbReference>
<dbReference type="EMBL" id="BK000394">
    <property type="protein sequence ID" value="DAA00184.1"/>
    <property type="molecule type" value="Genomic_DNA"/>
</dbReference>
<dbReference type="PIR" id="S09851">
    <property type="entry name" value="S09851"/>
</dbReference>
<dbReference type="GlyCosmos" id="P16730">
    <property type="glycosylation" value="4 sites, No reported glycans"/>
</dbReference>
<dbReference type="Proteomes" id="UP000008991">
    <property type="component" value="Segment"/>
</dbReference>
<dbReference type="Proteomes" id="UP000008992">
    <property type="component" value="Segment"/>
</dbReference>
<dbReference type="GO" id="GO:0042025">
    <property type="term" value="C:host cell nucleus"/>
    <property type="evidence" value="ECO:0007669"/>
    <property type="project" value="UniProtKB-SubCell"/>
</dbReference>
<dbReference type="InterPro" id="IPR004285">
    <property type="entry name" value="Herpes_UL87_C"/>
</dbReference>
<dbReference type="InterPro" id="IPR007618">
    <property type="entry name" value="Herpes_UL87_N"/>
</dbReference>
<dbReference type="Pfam" id="PF04532">
    <property type="entry name" value="DUF587"/>
    <property type="match status" value="1"/>
</dbReference>
<dbReference type="Pfam" id="PF03043">
    <property type="entry name" value="Herpes_UL87"/>
    <property type="match status" value="1"/>
</dbReference>
<proteinExistence type="inferred from homology"/>
<comment type="function">
    <text evidence="3">Functions concordantly with UL87 to initiate transcription from over half of all active viral promoters in late infection, without affecting host transcription. Acts on and binds to viral early-late and late kinetic-class promoters.</text>
</comment>
<comment type="subcellular location">
    <subcellularLocation>
        <location evidence="3">Host nucleus</location>
    </subcellularLocation>
</comment>
<comment type="similarity">
    <text evidence="4">Belongs to the herpesviridae UL87 family.</text>
</comment>
<accession>P16730</accession>
<accession>Q7M6K4</accession>
<keyword id="KW-0325">Glycoprotein</keyword>
<keyword id="KW-1048">Host nucleus</keyword>
<keyword id="KW-1185">Reference proteome</keyword>